<reference key="1">
    <citation type="journal article" date="2011" name="J. Bacteriol.">
        <title>Comparative genomics of 28 Salmonella enterica isolates: evidence for CRISPR-mediated adaptive sublineage evolution.</title>
        <authorList>
            <person name="Fricke W.F."/>
            <person name="Mammel M.K."/>
            <person name="McDermott P.F."/>
            <person name="Tartera C."/>
            <person name="White D.G."/>
            <person name="Leclerc J.E."/>
            <person name="Ravel J."/>
            <person name="Cebula T.A."/>
        </authorList>
    </citation>
    <scope>NUCLEOTIDE SEQUENCE [LARGE SCALE GENOMIC DNA]</scope>
    <source>
        <strain>CT_02021853</strain>
    </source>
</reference>
<gene>
    <name evidence="1" type="primary">nuoC</name>
    <name evidence="1" type="synonym">nuoCD</name>
    <name evidence="1" type="synonym">nuoD</name>
    <name type="ordered locus">SeD_A2672</name>
</gene>
<sequence>MTDLTAQDAAWSTRDHLDDPVIGELRNRFGPDAFTVQATRTGIPVVWVKREQLLEVGDFLKKLPKPYVMLFDLHGMDERLRTHRDGLPAADFSVFYHLISIERNRDIMLKVALSENDLRVPTFTKLFPNANWYERETWEMFGIDIEGHPHLTRIMMPQTWEGHPLRKDYPARATEFDPFELTKAKQDLEMEALTFKPEDWGMKRGTDNEDFMFLNLGPNHPSAHGAFRIILQLDGEEIVDCVPDIGYHHRGAEKMGERQSWHSYIPYTDRIEYLGGCVNEMPYVLAVEKLAGITVPDRVNVIRVMLSELFRINSHLLYISTFIQDVGAMTPVFFAFTDRQKIYDLVEAITGFRMHPAWFRIGGVAHDLPRGWDRLLREFLEWMPKRLDSYEKAALRNTILKGRSQGVAAYGAKEALEWGTTGAGLRATGIDFDVRKWRPYSGYENFDFEVPVGGGVSDCYTRVMLKVEELRQSLRILQQCLDNMPEGPFKADHPLTTPPPKERTLQHIETLITHFLQVSWGPVMPAQESFQMVEATKGINSYYLTSDGSTMSYRTRVRTPSFAHLQQIPSAIRGSLVSDLIVYLGSIDFVMSDVDR</sequence>
<keyword id="KW-0997">Cell inner membrane</keyword>
<keyword id="KW-1003">Cell membrane</keyword>
<keyword id="KW-0472">Membrane</keyword>
<keyword id="KW-0511">Multifunctional enzyme</keyword>
<keyword id="KW-0520">NAD</keyword>
<keyword id="KW-0874">Quinone</keyword>
<keyword id="KW-1278">Translocase</keyword>
<keyword id="KW-0813">Transport</keyword>
<keyword id="KW-0830">Ubiquinone</keyword>
<feature type="chain" id="PRO_0000358683" description="NADH-quinone oxidoreductase subunit C/D">
    <location>
        <begin position="1"/>
        <end position="596"/>
    </location>
</feature>
<feature type="region of interest" description="NADH dehydrogenase I subunit C" evidence="1">
    <location>
        <begin position="1"/>
        <end position="186"/>
    </location>
</feature>
<feature type="region of interest" description="NADH dehydrogenase I subunit D" evidence="1">
    <location>
        <begin position="210"/>
        <end position="596"/>
    </location>
</feature>
<organism>
    <name type="scientific">Salmonella dublin (strain CT_02021853)</name>
    <dbReference type="NCBI Taxonomy" id="439851"/>
    <lineage>
        <taxon>Bacteria</taxon>
        <taxon>Pseudomonadati</taxon>
        <taxon>Pseudomonadota</taxon>
        <taxon>Gammaproteobacteria</taxon>
        <taxon>Enterobacterales</taxon>
        <taxon>Enterobacteriaceae</taxon>
        <taxon>Salmonella</taxon>
    </lineage>
</organism>
<proteinExistence type="inferred from homology"/>
<name>NUOCD_SALDC</name>
<protein>
    <recommendedName>
        <fullName evidence="1">NADH-quinone oxidoreductase subunit C/D</fullName>
        <ecNumber evidence="1">7.1.1.-</ecNumber>
    </recommendedName>
    <alternativeName>
        <fullName evidence="1">NADH dehydrogenase I subunit C/D</fullName>
    </alternativeName>
    <alternativeName>
        <fullName evidence="1">NDH-1 subunit C/D</fullName>
    </alternativeName>
</protein>
<comment type="function">
    <text evidence="1">NDH-1 shuttles electrons from NADH, via FMN and iron-sulfur (Fe-S) centers, to quinones in the respiratory chain. The immediate electron acceptor for the enzyme in this species is believed to be ubiquinone. Couples the redox reaction to proton translocation (for every two electrons transferred, four hydrogen ions are translocated across the cytoplasmic membrane), and thus conserves the redox energy in a proton gradient.</text>
</comment>
<comment type="catalytic activity">
    <reaction evidence="1">
        <text>a quinone + NADH + 5 H(+)(in) = a quinol + NAD(+) + 4 H(+)(out)</text>
        <dbReference type="Rhea" id="RHEA:57888"/>
        <dbReference type="ChEBI" id="CHEBI:15378"/>
        <dbReference type="ChEBI" id="CHEBI:24646"/>
        <dbReference type="ChEBI" id="CHEBI:57540"/>
        <dbReference type="ChEBI" id="CHEBI:57945"/>
        <dbReference type="ChEBI" id="CHEBI:132124"/>
    </reaction>
</comment>
<comment type="subunit">
    <text evidence="1">NDH-1 is composed of 13 different subunits. Subunits NuoB, CD, E, F, and G constitute the peripheral sector of the complex.</text>
</comment>
<comment type="subcellular location">
    <subcellularLocation>
        <location evidence="1">Cell inner membrane</location>
        <topology evidence="1">Peripheral membrane protein</topology>
        <orientation evidence="1">Cytoplasmic side</orientation>
    </subcellularLocation>
</comment>
<comment type="similarity">
    <text evidence="1">In the N-terminal section; belongs to the complex I 30 kDa subunit family.</text>
</comment>
<comment type="similarity">
    <text evidence="1">In the C-terminal section; belongs to the complex I 49 kDa subunit family.</text>
</comment>
<comment type="sequence caution" evidence="2">
    <conflict type="erroneous initiation">
        <sequence resource="EMBL-CDS" id="ACH76272"/>
    </conflict>
</comment>
<dbReference type="EC" id="7.1.1.-" evidence="1"/>
<dbReference type="EMBL" id="CP001144">
    <property type="protein sequence ID" value="ACH76272.1"/>
    <property type="status" value="ALT_INIT"/>
    <property type="molecule type" value="Genomic_DNA"/>
</dbReference>
<dbReference type="SMR" id="B5FPG7"/>
<dbReference type="KEGG" id="sed:SeD_A2672"/>
<dbReference type="HOGENOM" id="CLU_015134_3_2_6"/>
<dbReference type="Proteomes" id="UP000008322">
    <property type="component" value="Chromosome"/>
</dbReference>
<dbReference type="GO" id="GO:0030964">
    <property type="term" value="C:NADH dehydrogenase complex"/>
    <property type="evidence" value="ECO:0007669"/>
    <property type="project" value="InterPro"/>
</dbReference>
<dbReference type="GO" id="GO:0005886">
    <property type="term" value="C:plasma membrane"/>
    <property type="evidence" value="ECO:0007669"/>
    <property type="project" value="UniProtKB-SubCell"/>
</dbReference>
<dbReference type="GO" id="GO:0051287">
    <property type="term" value="F:NAD binding"/>
    <property type="evidence" value="ECO:0007669"/>
    <property type="project" value="InterPro"/>
</dbReference>
<dbReference type="GO" id="GO:0008137">
    <property type="term" value="F:NADH dehydrogenase (ubiquinone) activity"/>
    <property type="evidence" value="ECO:0007669"/>
    <property type="project" value="InterPro"/>
</dbReference>
<dbReference type="GO" id="GO:0050136">
    <property type="term" value="F:NADH:ubiquinone reductase (non-electrogenic) activity"/>
    <property type="evidence" value="ECO:0007669"/>
    <property type="project" value="UniProtKB-UniRule"/>
</dbReference>
<dbReference type="GO" id="GO:0048038">
    <property type="term" value="F:quinone binding"/>
    <property type="evidence" value="ECO:0007669"/>
    <property type="project" value="UniProtKB-KW"/>
</dbReference>
<dbReference type="FunFam" id="1.10.645.10:FF:000001">
    <property type="entry name" value="NADH-quinone oxidoreductase subunit C/D"/>
    <property type="match status" value="1"/>
</dbReference>
<dbReference type="FunFam" id="3.30.460.80:FF:000001">
    <property type="entry name" value="NADH-quinone oxidoreductase subunit C/D"/>
    <property type="match status" value="1"/>
</dbReference>
<dbReference type="Gene3D" id="1.10.645.10">
    <property type="entry name" value="Cytochrome-c3 Hydrogenase, chain B"/>
    <property type="match status" value="1"/>
</dbReference>
<dbReference type="Gene3D" id="3.30.460.80">
    <property type="entry name" value="NADH:ubiquinone oxidoreductase, 30kDa subunit"/>
    <property type="match status" value="1"/>
</dbReference>
<dbReference type="HAMAP" id="MF_01359">
    <property type="entry name" value="NDH1_NuoCD_1"/>
    <property type="match status" value="1"/>
</dbReference>
<dbReference type="HAMAP" id="MF_01358">
    <property type="entry name" value="NDH1_NuoD"/>
    <property type="match status" value="1"/>
</dbReference>
<dbReference type="InterPro" id="IPR010218">
    <property type="entry name" value="NADH_DH_suC"/>
</dbReference>
<dbReference type="InterPro" id="IPR023062">
    <property type="entry name" value="NADH_DH_suCD"/>
</dbReference>
<dbReference type="InterPro" id="IPR001135">
    <property type="entry name" value="NADH_Q_OxRdtase_suD"/>
</dbReference>
<dbReference type="InterPro" id="IPR037232">
    <property type="entry name" value="NADH_quin_OxRdtase_su_C/D-like"/>
</dbReference>
<dbReference type="InterPro" id="IPR001268">
    <property type="entry name" value="NADH_UbQ_OxRdtase_30kDa_su"/>
</dbReference>
<dbReference type="InterPro" id="IPR014029">
    <property type="entry name" value="NADH_UbQ_OxRdtase_49kDa_CS"/>
</dbReference>
<dbReference type="InterPro" id="IPR022885">
    <property type="entry name" value="NDH1_su_D/H"/>
</dbReference>
<dbReference type="InterPro" id="IPR029014">
    <property type="entry name" value="NiFe-Hase_large"/>
</dbReference>
<dbReference type="NCBIfam" id="TIGR01961">
    <property type="entry name" value="NuoC_fam"/>
    <property type="match status" value="1"/>
</dbReference>
<dbReference type="NCBIfam" id="TIGR01962">
    <property type="entry name" value="NuoD"/>
    <property type="match status" value="1"/>
</dbReference>
<dbReference type="NCBIfam" id="NF004739">
    <property type="entry name" value="PRK06075.1"/>
    <property type="match status" value="1"/>
</dbReference>
<dbReference type="NCBIfam" id="NF008728">
    <property type="entry name" value="PRK11742.1"/>
    <property type="match status" value="1"/>
</dbReference>
<dbReference type="PANTHER" id="PTHR11993:SF45">
    <property type="entry name" value="NADH-QUINONE OXIDOREDUCTASE SUBUNIT C_D"/>
    <property type="match status" value="1"/>
</dbReference>
<dbReference type="PANTHER" id="PTHR11993">
    <property type="entry name" value="NADH-UBIQUINONE OXIDOREDUCTASE 49 KDA SUBUNIT"/>
    <property type="match status" value="1"/>
</dbReference>
<dbReference type="Pfam" id="PF00329">
    <property type="entry name" value="Complex1_30kDa"/>
    <property type="match status" value="1"/>
</dbReference>
<dbReference type="Pfam" id="PF00346">
    <property type="entry name" value="Complex1_49kDa"/>
    <property type="match status" value="1"/>
</dbReference>
<dbReference type="SUPFAM" id="SSF56762">
    <property type="entry name" value="HydB/Nqo4-like"/>
    <property type="match status" value="1"/>
</dbReference>
<dbReference type="SUPFAM" id="SSF143243">
    <property type="entry name" value="Nqo5-like"/>
    <property type="match status" value="1"/>
</dbReference>
<dbReference type="PROSITE" id="PS00535">
    <property type="entry name" value="COMPLEX1_49K"/>
    <property type="match status" value="1"/>
</dbReference>
<evidence type="ECO:0000255" key="1">
    <source>
        <dbReference type="HAMAP-Rule" id="MF_01359"/>
    </source>
</evidence>
<evidence type="ECO:0000305" key="2"/>
<accession>B5FPG7</accession>